<sequence>MNLILMGLPGAGKGTQAEQIVAKYNIPHISTGDMFRAAMKAETEMGLQAKSFIDKGALVPDEVTIGIVRERLSQEDCVRGFLLDGFPRTVAQASALEEIMKDLGKKIDYVLNINVDSGLLLKRLTGRRICKECGATYHLEFNAPAKADVCDKCGGELYQRSDDNEETVANRLDVNIKQTKPLLDFYEELGYLQSINGEQDINKVFADIDVLIGGLA</sequence>
<comment type="function">
    <text evidence="1">Catalyzes the reversible transfer of the terminal phosphate group between ATP and AMP. Plays an important role in cellular energy homeostasis and in adenine nucleotide metabolism.</text>
</comment>
<comment type="catalytic activity">
    <reaction evidence="1">
        <text>AMP + ATP = 2 ADP</text>
        <dbReference type="Rhea" id="RHEA:12973"/>
        <dbReference type="ChEBI" id="CHEBI:30616"/>
        <dbReference type="ChEBI" id="CHEBI:456215"/>
        <dbReference type="ChEBI" id="CHEBI:456216"/>
        <dbReference type="EC" id="2.7.4.3"/>
    </reaction>
</comment>
<comment type="pathway">
    <text evidence="1">Purine metabolism; AMP biosynthesis via salvage pathway; AMP from ADP: step 1/1.</text>
</comment>
<comment type="subunit">
    <text evidence="1">Monomer.</text>
</comment>
<comment type="subcellular location">
    <subcellularLocation>
        <location evidence="1">Cytoplasm</location>
    </subcellularLocation>
</comment>
<comment type="domain">
    <text evidence="1">Consists of three domains, a large central CORE domain and two small peripheral domains, NMPbind and LID, which undergo movements during catalysis. The LID domain closes over the site of phosphoryl transfer upon ATP binding. Assembling and dissambling the active center during each catalytic cycle provides an effective means to prevent ATP hydrolysis. Some bacteria have evolved a zinc-coordinating structure that stabilizes the LID domain.</text>
</comment>
<comment type="similarity">
    <text evidence="1">Belongs to the adenylate kinase family.</text>
</comment>
<protein>
    <recommendedName>
        <fullName evidence="1">Adenylate kinase</fullName>
        <shortName evidence="1">AK</shortName>
        <ecNumber evidence="1">2.7.4.3</ecNumber>
    </recommendedName>
    <alternativeName>
        <fullName evidence="1">ATP-AMP transphosphorylase</fullName>
    </alternativeName>
    <alternativeName>
        <fullName evidence="1">ATP:AMP phosphotransferase</fullName>
    </alternativeName>
    <alternativeName>
        <fullName evidence="1">Adenylate monophosphate kinase</fullName>
    </alternativeName>
</protein>
<proteinExistence type="inferred from homology"/>
<dbReference type="EC" id="2.7.4.3" evidence="1"/>
<dbReference type="EMBL" id="CP000485">
    <property type="protein sequence ID" value="ABK83544.1"/>
    <property type="molecule type" value="Genomic_DNA"/>
</dbReference>
<dbReference type="RefSeq" id="WP_001048992.1">
    <property type="nucleotide sequence ID" value="NC_008600.1"/>
</dbReference>
<dbReference type="SMR" id="A0R8K1"/>
<dbReference type="KEGG" id="btl:BALH_0129"/>
<dbReference type="HOGENOM" id="CLU_032354_1_2_9"/>
<dbReference type="UniPathway" id="UPA00588">
    <property type="reaction ID" value="UER00649"/>
</dbReference>
<dbReference type="GO" id="GO:0005737">
    <property type="term" value="C:cytoplasm"/>
    <property type="evidence" value="ECO:0007669"/>
    <property type="project" value="UniProtKB-SubCell"/>
</dbReference>
<dbReference type="GO" id="GO:0004017">
    <property type="term" value="F:adenylate kinase activity"/>
    <property type="evidence" value="ECO:0007669"/>
    <property type="project" value="UniProtKB-UniRule"/>
</dbReference>
<dbReference type="GO" id="GO:0005524">
    <property type="term" value="F:ATP binding"/>
    <property type="evidence" value="ECO:0007669"/>
    <property type="project" value="UniProtKB-UniRule"/>
</dbReference>
<dbReference type="GO" id="GO:0008270">
    <property type="term" value="F:zinc ion binding"/>
    <property type="evidence" value="ECO:0007669"/>
    <property type="project" value="UniProtKB-UniRule"/>
</dbReference>
<dbReference type="GO" id="GO:0044209">
    <property type="term" value="P:AMP salvage"/>
    <property type="evidence" value="ECO:0007669"/>
    <property type="project" value="UniProtKB-UniRule"/>
</dbReference>
<dbReference type="CDD" id="cd01428">
    <property type="entry name" value="ADK"/>
    <property type="match status" value="1"/>
</dbReference>
<dbReference type="FunFam" id="3.40.50.300:FF:000106">
    <property type="entry name" value="Adenylate kinase mitochondrial"/>
    <property type="match status" value="1"/>
</dbReference>
<dbReference type="Gene3D" id="3.40.50.300">
    <property type="entry name" value="P-loop containing nucleotide triphosphate hydrolases"/>
    <property type="match status" value="1"/>
</dbReference>
<dbReference type="HAMAP" id="MF_00235">
    <property type="entry name" value="Adenylate_kinase_Adk"/>
    <property type="match status" value="1"/>
</dbReference>
<dbReference type="InterPro" id="IPR006259">
    <property type="entry name" value="Adenyl_kin_sub"/>
</dbReference>
<dbReference type="InterPro" id="IPR000850">
    <property type="entry name" value="Adenylat/UMP-CMP_kin"/>
</dbReference>
<dbReference type="InterPro" id="IPR033690">
    <property type="entry name" value="Adenylat_kinase_CS"/>
</dbReference>
<dbReference type="InterPro" id="IPR007862">
    <property type="entry name" value="Adenylate_kinase_lid-dom"/>
</dbReference>
<dbReference type="InterPro" id="IPR027417">
    <property type="entry name" value="P-loop_NTPase"/>
</dbReference>
<dbReference type="NCBIfam" id="TIGR01351">
    <property type="entry name" value="adk"/>
    <property type="match status" value="1"/>
</dbReference>
<dbReference type="NCBIfam" id="NF001380">
    <property type="entry name" value="PRK00279.1-2"/>
    <property type="match status" value="1"/>
</dbReference>
<dbReference type="NCBIfam" id="NF001381">
    <property type="entry name" value="PRK00279.1-3"/>
    <property type="match status" value="1"/>
</dbReference>
<dbReference type="NCBIfam" id="NF011100">
    <property type="entry name" value="PRK14527.1"/>
    <property type="match status" value="1"/>
</dbReference>
<dbReference type="PANTHER" id="PTHR23359">
    <property type="entry name" value="NUCLEOTIDE KINASE"/>
    <property type="match status" value="1"/>
</dbReference>
<dbReference type="Pfam" id="PF00406">
    <property type="entry name" value="ADK"/>
    <property type="match status" value="1"/>
</dbReference>
<dbReference type="Pfam" id="PF05191">
    <property type="entry name" value="ADK_lid"/>
    <property type="match status" value="1"/>
</dbReference>
<dbReference type="PRINTS" id="PR00094">
    <property type="entry name" value="ADENYLTKNASE"/>
</dbReference>
<dbReference type="SUPFAM" id="SSF52540">
    <property type="entry name" value="P-loop containing nucleoside triphosphate hydrolases"/>
    <property type="match status" value="1"/>
</dbReference>
<dbReference type="PROSITE" id="PS00113">
    <property type="entry name" value="ADENYLATE_KINASE"/>
    <property type="match status" value="1"/>
</dbReference>
<feature type="chain" id="PRO_1000021711" description="Adenylate kinase">
    <location>
        <begin position="1"/>
        <end position="216"/>
    </location>
</feature>
<feature type="region of interest" description="NMP" evidence="1">
    <location>
        <begin position="30"/>
        <end position="59"/>
    </location>
</feature>
<feature type="region of interest" description="LID" evidence="1">
    <location>
        <begin position="126"/>
        <end position="163"/>
    </location>
</feature>
<feature type="binding site" evidence="1">
    <location>
        <begin position="10"/>
        <end position="15"/>
    </location>
    <ligand>
        <name>ATP</name>
        <dbReference type="ChEBI" id="CHEBI:30616"/>
    </ligand>
</feature>
<feature type="binding site" evidence="1">
    <location>
        <position position="31"/>
    </location>
    <ligand>
        <name>AMP</name>
        <dbReference type="ChEBI" id="CHEBI:456215"/>
    </ligand>
</feature>
<feature type="binding site" evidence="1">
    <location>
        <position position="36"/>
    </location>
    <ligand>
        <name>AMP</name>
        <dbReference type="ChEBI" id="CHEBI:456215"/>
    </ligand>
</feature>
<feature type="binding site" evidence="1">
    <location>
        <begin position="57"/>
        <end position="59"/>
    </location>
    <ligand>
        <name>AMP</name>
        <dbReference type="ChEBI" id="CHEBI:456215"/>
    </ligand>
</feature>
<feature type="binding site" evidence="1">
    <location>
        <begin position="85"/>
        <end position="88"/>
    </location>
    <ligand>
        <name>AMP</name>
        <dbReference type="ChEBI" id="CHEBI:456215"/>
    </ligand>
</feature>
<feature type="binding site" evidence="1">
    <location>
        <position position="92"/>
    </location>
    <ligand>
        <name>AMP</name>
        <dbReference type="ChEBI" id="CHEBI:456215"/>
    </ligand>
</feature>
<feature type="binding site" evidence="1">
    <location>
        <position position="127"/>
    </location>
    <ligand>
        <name>ATP</name>
        <dbReference type="ChEBI" id="CHEBI:30616"/>
    </ligand>
</feature>
<feature type="binding site" evidence="1">
    <location>
        <position position="130"/>
    </location>
    <ligand>
        <name>Zn(2+)</name>
        <dbReference type="ChEBI" id="CHEBI:29105"/>
        <note>structural</note>
    </ligand>
</feature>
<feature type="binding site" evidence="1">
    <location>
        <position position="133"/>
    </location>
    <ligand>
        <name>Zn(2+)</name>
        <dbReference type="ChEBI" id="CHEBI:29105"/>
        <note>structural</note>
    </ligand>
</feature>
<feature type="binding site" evidence="1">
    <location>
        <begin position="136"/>
        <end position="137"/>
    </location>
    <ligand>
        <name>ATP</name>
        <dbReference type="ChEBI" id="CHEBI:30616"/>
    </ligand>
</feature>
<feature type="binding site" evidence="1">
    <location>
        <position position="150"/>
    </location>
    <ligand>
        <name>Zn(2+)</name>
        <dbReference type="ChEBI" id="CHEBI:29105"/>
        <note>structural</note>
    </ligand>
</feature>
<feature type="binding site" evidence="1">
    <location>
        <position position="153"/>
    </location>
    <ligand>
        <name>Zn(2+)</name>
        <dbReference type="ChEBI" id="CHEBI:29105"/>
        <note>structural</note>
    </ligand>
</feature>
<feature type="binding site" evidence="1">
    <location>
        <position position="160"/>
    </location>
    <ligand>
        <name>AMP</name>
        <dbReference type="ChEBI" id="CHEBI:456215"/>
    </ligand>
</feature>
<feature type="binding site" evidence="1">
    <location>
        <position position="171"/>
    </location>
    <ligand>
        <name>AMP</name>
        <dbReference type="ChEBI" id="CHEBI:456215"/>
    </ligand>
</feature>
<feature type="binding site" evidence="1">
    <location>
        <position position="199"/>
    </location>
    <ligand>
        <name>ATP</name>
        <dbReference type="ChEBI" id="CHEBI:30616"/>
    </ligand>
</feature>
<organism>
    <name type="scientific">Bacillus thuringiensis (strain Al Hakam)</name>
    <dbReference type="NCBI Taxonomy" id="412694"/>
    <lineage>
        <taxon>Bacteria</taxon>
        <taxon>Bacillati</taxon>
        <taxon>Bacillota</taxon>
        <taxon>Bacilli</taxon>
        <taxon>Bacillales</taxon>
        <taxon>Bacillaceae</taxon>
        <taxon>Bacillus</taxon>
        <taxon>Bacillus cereus group</taxon>
    </lineage>
</organism>
<name>KAD_BACAH</name>
<gene>
    <name evidence="1" type="primary">adk</name>
    <name type="ordered locus">BALH_0129</name>
</gene>
<evidence type="ECO:0000255" key="1">
    <source>
        <dbReference type="HAMAP-Rule" id="MF_00235"/>
    </source>
</evidence>
<reference key="1">
    <citation type="journal article" date="2007" name="J. Bacteriol.">
        <title>The complete genome sequence of Bacillus thuringiensis Al Hakam.</title>
        <authorList>
            <person name="Challacombe J.F."/>
            <person name="Altherr M.R."/>
            <person name="Xie G."/>
            <person name="Bhotika S.S."/>
            <person name="Brown N."/>
            <person name="Bruce D."/>
            <person name="Campbell C.S."/>
            <person name="Campbell M.L."/>
            <person name="Chen J."/>
            <person name="Chertkov O."/>
            <person name="Cleland C."/>
            <person name="Dimitrijevic M."/>
            <person name="Doggett N.A."/>
            <person name="Fawcett J.J."/>
            <person name="Glavina T."/>
            <person name="Goodwin L.A."/>
            <person name="Green L.D."/>
            <person name="Han C.S."/>
            <person name="Hill K.K."/>
            <person name="Hitchcock P."/>
            <person name="Jackson P.J."/>
            <person name="Keim P."/>
            <person name="Kewalramani A.R."/>
            <person name="Longmire J."/>
            <person name="Lucas S."/>
            <person name="Malfatti S."/>
            <person name="Martinez D."/>
            <person name="McMurry K."/>
            <person name="Meincke L.J."/>
            <person name="Misra M."/>
            <person name="Moseman B.L."/>
            <person name="Mundt M."/>
            <person name="Munk A.C."/>
            <person name="Okinaka R.T."/>
            <person name="Parson-Quintana B."/>
            <person name="Reilly L.P."/>
            <person name="Richardson P."/>
            <person name="Robinson D.L."/>
            <person name="Saunders E."/>
            <person name="Tapia R."/>
            <person name="Tesmer J.G."/>
            <person name="Thayer N."/>
            <person name="Thompson L.S."/>
            <person name="Tice H."/>
            <person name="Ticknor L.O."/>
            <person name="Wills P.L."/>
            <person name="Gilna P."/>
            <person name="Brettin T.S."/>
        </authorList>
    </citation>
    <scope>NUCLEOTIDE SEQUENCE [LARGE SCALE GENOMIC DNA]</scope>
    <source>
        <strain>Al Hakam</strain>
    </source>
</reference>
<accession>A0R8K1</accession>
<keyword id="KW-0067">ATP-binding</keyword>
<keyword id="KW-0963">Cytoplasm</keyword>
<keyword id="KW-0418">Kinase</keyword>
<keyword id="KW-0479">Metal-binding</keyword>
<keyword id="KW-0545">Nucleotide biosynthesis</keyword>
<keyword id="KW-0547">Nucleotide-binding</keyword>
<keyword id="KW-0808">Transferase</keyword>
<keyword id="KW-0862">Zinc</keyword>